<proteinExistence type="inferred from homology"/>
<accession>Q3AF06</accession>
<evidence type="ECO:0000255" key="1">
    <source>
        <dbReference type="HAMAP-Rule" id="MF_00735"/>
    </source>
</evidence>
<name>PRMA_CARHZ</name>
<sequence length="305" mass="33986">MKYLEIAVEVESCFTETVADIFWEFNTGGVSIEDPLLLWQYINAQIWDAYEFPDSVLKAERATVRAYFPLTENINTLLSQINERLKSLGIPFNLYFQEVDEESWANSWKKYFKPVEVGEFLIKPTWEKLPSGKEDKKIIEIDPGMAFGTGTHVTTALVLEALPKYVSPGKVVVDVGTGSGILAIASALLGAEKIYALDIDPVAVKVARENISINRLEDKITVIENDLLHGFNQTVDVIIANIIAAVIKELALDAYEKLATGGIFIGSGIIVEREKEVMDKLLEVGFKIIERKNSGGWCLLVARKE</sequence>
<comment type="function">
    <text evidence="1">Methylates ribosomal protein L11.</text>
</comment>
<comment type="catalytic activity">
    <reaction evidence="1">
        <text>L-lysyl-[protein] + 3 S-adenosyl-L-methionine = N(6),N(6),N(6)-trimethyl-L-lysyl-[protein] + 3 S-adenosyl-L-homocysteine + 3 H(+)</text>
        <dbReference type="Rhea" id="RHEA:54192"/>
        <dbReference type="Rhea" id="RHEA-COMP:9752"/>
        <dbReference type="Rhea" id="RHEA-COMP:13826"/>
        <dbReference type="ChEBI" id="CHEBI:15378"/>
        <dbReference type="ChEBI" id="CHEBI:29969"/>
        <dbReference type="ChEBI" id="CHEBI:57856"/>
        <dbReference type="ChEBI" id="CHEBI:59789"/>
        <dbReference type="ChEBI" id="CHEBI:61961"/>
    </reaction>
</comment>
<comment type="subcellular location">
    <subcellularLocation>
        <location evidence="1">Cytoplasm</location>
    </subcellularLocation>
</comment>
<comment type="similarity">
    <text evidence="1">Belongs to the methyltransferase superfamily. PrmA family.</text>
</comment>
<dbReference type="EC" id="2.1.1.-" evidence="1"/>
<dbReference type="EMBL" id="CP000141">
    <property type="protein sequence ID" value="ABB15711.1"/>
    <property type="molecule type" value="Genomic_DNA"/>
</dbReference>
<dbReference type="RefSeq" id="WP_011343354.1">
    <property type="nucleotide sequence ID" value="NC_007503.1"/>
</dbReference>
<dbReference type="SMR" id="Q3AF06"/>
<dbReference type="FunCoup" id="Q3AF06">
    <property type="interactions" value="305"/>
</dbReference>
<dbReference type="STRING" id="246194.CHY_0417"/>
<dbReference type="KEGG" id="chy:CHY_0417"/>
<dbReference type="eggNOG" id="COG2264">
    <property type="taxonomic scope" value="Bacteria"/>
</dbReference>
<dbReference type="HOGENOM" id="CLU_049382_0_1_9"/>
<dbReference type="InParanoid" id="Q3AF06"/>
<dbReference type="Proteomes" id="UP000002706">
    <property type="component" value="Chromosome"/>
</dbReference>
<dbReference type="GO" id="GO:0005737">
    <property type="term" value="C:cytoplasm"/>
    <property type="evidence" value="ECO:0007669"/>
    <property type="project" value="UniProtKB-SubCell"/>
</dbReference>
<dbReference type="GO" id="GO:0016279">
    <property type="term" value="F:protein-lysine N-methyltransferase activity"/>
    <property type="evidence" value="ECO:0007669"/>
    <property type="project" value="RHEA"/>
</dbReference>
<dbReference type="GO" id="GO:0032259">
    <property type="term" value="P:methylation"/>
    <property type="evidence" value="ECO:0007669"/>
    <property type="project" value="UniProtKB-KW"/>
</dbReference>
<dbReference type="CDD" id="cd02440">
    <property type="entry name" value="AdoMet_MTases"/>
    <property type="match status" value="1"/>
</dbReference>
<dbReference type="Gene3D" id="3.40.50.150">
    <property type="entry name" value="Vaccinia Virus protein VP39"/>
    <property type="match status" value="1"/>
</dbReference>
<dbReference type="HAMAP" id="MF_00735">
    <property type="entry name" value="Methyltr_PrmA"/>
    <property type="match status" value="1"/>
</dbReference>
<dbReference type="InterPro" id="IPR050078">
    <property type="entry name" value="Ribosomal_L11_MeTrfase_PrmA"/>
</dbReference>
<dbReference type="InterPro" id="IPR004498">
    <property type="entry name" value="Ribosomal_PrmA_MeTrfase"/>
</dbReference>
<dbReference type="InterPro" id="IPR029063">
    <property type="entry name" value="SAM-dependent_MTases_sf"/>
</dbReference>
<dbReference type="NCBIfam" id="TIGR00406">
    <property type="entry name" value="prmA"/>
    <property type="match status" value="1"/>
</dbReference>
<dbReference type="PANTHER" id="PTHR43648">
    <property type="entry name" value="ELECTRON TRANSFER FLAVOPROTEIN BETA SUBUNIT LYSINE METHYLTRANSFERASE"/>
    <property type="match status" value="1"/>
</dbReference>
<dbReference type="PANTHER" id="PTHR43648:SF1">
    <property type="entry name" value="ELECTRON TRANSFER FLAVOPROTEIN BETA SUBUNIT LYSINE METHYLTRANSFERASE"/>
    <property type="match status" value="1"/>
</dbReference>
<dbReference type="Pfam" id="PF06325">
    <property type="entry name" value="PrmA"/>
    <property type="match status" value="1"/>
</dbReference>
<dbReference type="PIRSF" id="PIRSF000401">
    <property type="entry name" value="RPL11_MTase"/>
    <property type="match status" value="1"/>
</dbReference>
<dbReference type="SUPFAM" id="SSF53335">
    <property type="entry name" value="S-adenosyl-L-methionine-dependent methyltransferases"/>
    <property type="match status" value="1"/>
</dbReference>
<protein>
    <recommendedName>
        <fullName evidence="1">Ribosomal protein L11 methyltransferase</fullName>
        <shortName evidence="1">L11 Mtase</shortName>
        <ecNumber evidence="1">2.1.1.-</ecNumber>
    </recommendedName>
</protein>
<keyword id="KW-0963">Cytoplasm</keyword>
<keyword id="KW-0489">Methyltransferase</keyword>
<keyword id="KW-1185">Reference proteome</keyword>
<keyword id="KW-0949">S-adenosyl-L-methionine</keyword>
<keyword id="KW-0808">Transferase</keyword>
<feature type="chain" id="PRO_1000046006" description="Ribosomal protein L11 methyltransferase">
    <location>
        <begin position="1"/>
        <end position="305"/>
    </location>
</feature>
<feature type="binding site" evidence="1">
    <location>
        <position position="155"/>
    </location>
    <ligand>
        <name>S-adenosyl-L-methionine</name>
        <dbReference type="ChEBI" id="CHEBI:59789"/>
    </ligand>
</feature>
<feature type="binding site" evidence="1">
    <location>
        <position position="176"/>
    </location>
    <ligand>
        <name>S-adenosyl-L-methionine</name>
        <dbReference type="ChEBI" id="CHEBI:59789"/>
    </ligand>
</feature>
<feature type="binding site" evidence="1">
    <location>
        <position position="198"/>
    </location>
    <ligand>
        <name>S-adenosyl-L-methionine</name>
        <dbReference type="ChEBI" id="CHEBI:59789"/>
    </ligand>
</feature>
<feature type="binding site" evidence="1">
    <location>
        <position position="241"/>
    </location>
    <ligand>
        <name>S-adenosyl-L-methionine</name>
        <dbReference type="ChEBI" id="CHEBI:59789"/>
    </ligand>
</feature>
<gene>
    <name evidence="1" type="primary">prmA</name>
    <name type="ordered locus">CHY_0417</name>
</gene>
<reference key="1">
    <citation type="journal article" date="2005" name="PLoS Genet.">
        <title>Life in hot carbon monoxide: the complete genome sequence of Carboxydothermus hydrogenoformans Z-2901.</title>
        <authorList>
            <person name="Wu M."/>
            <person name="Ren Q."/>
            <person name="Durkin A.S."/>
            <person name="Daugherty S.C."/>
            <person name="Brinkac L.M."/>
            <person name="Dodson R.J."/>
            <person name="Madupu R."/>
            <person name="Sullivan S.A."/>
            <person name="Kolonay J.F."/>
            <person name="Nelson W.C."/>
            <person name="Tallon L.J."/>
            <person name="Jones K.M."/>
            <person name="Ulrich L.E."/>
            <person name="Gonzalez J.M."/>
            <person name="Zhulin I.B."/>
            <person name="Robb F.T."/>
            <person name="Eisen J.A."/>
        </authorList>
    </citation>
    <scope>NUCLEOTIDE SEQUENCE [LARGE SCALE GENOMIC DNA]</scope>
    <source>
        <strain>ATCC BAA-161 / DSM 6008 / Z-2901</strain>
    </source>
</reference>
<organism>
    <name type="scientific">Carboxydothermus hydrogenoformans (strain ATCC BAA-161 / DSM 6008 / Z-2901)</name>
    <dbReference type="NCBI Taxonomy" id="246194"/>
    <lineage>
        <taxon>Bacteria</taxon>
        <taxon>Bacillati</taxon>
        <taxon>Bacillota</taxon>
        <taxon>Clostridia</taxon>
        <taxon>Thermoanaerobacterales</taxon>
        <taxon>Thermoanaerobacteraceae</taxon>
        <taxon>Carboxydothermus</taxon>
    </lineage>
</organism>